<comment type="function">
    <text evidence="1">Involved in the biosynthesis of the osmoprotectant glycine betaine. Catalyzes the irreversible oxidation of betaine aldehyde to the corresponding acid.</text>
</comment>
<comment type="catalytic activity">
    <reaction evidence="1">
        <text>betaine aldehyde + NAD(+) + H2O = glycine betaine + NADH + 2 H(+)</text>
        <dbReference type="Rhea" id="RHEA:15305"/>
        <dbReference type="ChEBI" id="CHEBI:15377"/>
        <dbReference type="ChEBI" id="CHEBI:15378"/>
        <dbReference type="ChEBI" id="CHEBI:15710"/>
        <dbReference type="ChEBI" id="CHEBI:17750"/>
        <dbReference type="ChEBI" id="CHEBI:57540"/>
        <dbReference type="ChEBI" id="CHEBI:57945"/>
        <dbReference type="EC" id="1.2.1.8"/>
    </reaction>
    <physiologicalReaction direction="left-to-right" evidence="1">
        <dbReference type="Rhea" id="RHEA:15306"/>
    </physiologicalReaction>
</comment>
<comment type="cofactor">
    <cofactor evidence="1">
        <name>K(+)</name>
        <dbReference type="ChEBI" id="CHEBI:29103"/>
    </cofactor>
    <text evidence="1">Binds 2 potassium ions per subunit.</text>
</comment>
<comment type="pathway">
    <text evidence="1">Amine and polyamine biosynthesis; betaine biosynthesis via choline pathway; betaine from betaine aldehyde: step 1/1.</text>
</comment>
<comment type="subunit">
    <text evidence="1">Dimer of dimers.</text>
</comment>
<comment type="similarity">
    <text evidence="1">Belongs to the aldehyde dehydrogenase family.</text>
</comment>
<proteinExistence type="inferred from homology"/>
<evidence type="ECO:0000255" key="1">
    <source>
        <dbReference type="HAMAP-Rule" id="MF_00804"/>
    </source>
</evidence>
<reference key="1">
    <citation type="journal article" date="2008" name="PLoS ONE">
        <title>Comparative analysis of Acinetobacters: three genomes for three lifestyles.</title>
        <authorList>
            <person name="Vallenet D."/>
            <person name="Nordmann P."/>
            <person name="Barbe V."/>
            <person name="Poirel L."/>
            <person name="Mangenot S."/>
            <person name="Bataille E."/>
            <person name="Dossat C."/>
            <person name="Gas S."/>
            <person name="Kreimeyer A."/>
            <person name="Lenoble P."/>
            <person name="Oztas S."/>
            <person name="Poulain J."/>
            <person name="Segurens B."/>
            <person name="Robert C."/>
            <person name="Abergel C."/>
            <person name="Claverie J.-M."/>
            <person name="Raoult D."/>
            <person name="Medigue C."/>
            <person name="Weissenbach J."/>
            <person name="Cruveiller S."/>
        </authorList>
    </citation>
    <scope>NUCLEOTIDE SEQUENCE [LARGE SCALE GENOMIC DNA]</scope>
    <source>
        <strain>AYE</strain>
    </source>
</reference>
<sequence length="490" mass="53135">MSDVQVHQLYIHGRYVEATSGKTFNSINPANGEIIATLQQASEQDIEAAVKSAQQGQKIWAAMTAMERSRILRRAVDILRERNDELARLETLDTGKAYSETSTVDIVTGADVLEYYAGLATAIQGEQVPLRESSFFYTRREPLGVVAGIGAWNYPIQIALWKSAPALAAGNAMIFKPSETTPLTALKLAEIYTEAGLPDGVFNVVQGAGREIGQWLTEHPVIEKISFTGGVETGKKVMASAAGSTLKEVTMELGGKSPLIICEDADLNRAADIAVMANFFSSGQVCTNGTRVFVPKSRLADFEKAVVERVKRIRVGDPMAEDTNFGPLTSFPHMEKVLSFIESGKQQGAKVLIGGGRATEGELAKGAYVLPTVFSDCTDQMAIVQEEIFGPVMSILSYETEEEVIQRANDTTFGLAAGVVTQDISRAHRIIHQIEAGICWINTWGESPAEMPVGGYKQSGVGRENGLTTLGHYTRIKSIQVELGDYQSIF</sequence>
<organism>
    <name type="scientific">Acinetobacter baumannii (strain AYE)</name>
    <dbReference type="NCBI Taxonomy" id="509173"/>
    <lineage>
        <taxon>Bacteria</taxon>
        <taxon>Pseudomonadati</taxon>
        <taxon>Pseudomonadota</taxon>
        <taxon>Gammaproteobacteria</taxon>
        <taxon>Moraxellales</taxon>
        <taxon>Moraxellaceae</taxon>
        <taxon>Acinetobacter</taxon>
        <taxon>Acinetobacter calcoaceticus/baumannii complex</taxon>
    </lineage>
</organism>
<gene>
    <name evidence="1" type="primary">betB</name>
    <name type="ordered locus">ABAYE2867</name>
</gene>
<dbReference type="EC" id="1.2.1.8" evidence="1"/>
<dbReference type="EMBL" id="CU459141">
    <property type="protein sequence ID" value="CAM87694.1"/>
    <property type="molecule type" value="Genomic_DNA"/>
</dbReference>
<dbReference type="RefSeq" id="WP_001286307.1">
    <property type="nucleotide sequence ID" value="NZ_JBDGFB010000015.1"/>
</dbReference>
<dbReference type="SMR" id="B0V944"/>
<dbReference type="EnsemblBacteria" id="CAM87694">
    <property type="protein sequence ID" value="CAM87694"/>
    <property type="gene ID" value="ABAYE2867"/>
</dbReference>
<dbReference type="KEGG" id="aby:ABAYE2867"/>
<dbReference type="HOGENOM" id="CLU_005391_0_0_6"/>
<dbReference type="UniPathway" id="UPA00529">
    <property type="reaction ID" value="UER00386"/>
</dbReference>
<dbReference type="GO" id="GO:0008802">
    <property type="term" value="F:betaine-aldehyde dehydrogenase (NAD+) activity"/>
    <property type="evidence" value="ECO:0007669"/>
    <property type="project" value="UniProtKB-UniRule"/>
</dbReference>
<dbReference type="GO" id="GO:0046872">
    <property type="term" value="F:metal ion binding"/>
    <property type="evidence" value="ECO:0007669"/>
    <property type="project" value="UniProtKB-KW"/>
</dbReference>
<dbReference type="GO" id="GO:0019285">
    <property type="term" value="P:glycine betaine biosynthetic process from choline"/>
    <property type="evidence" value="ECO:0007669"/>
    <property type="project" value="UniProtKB-UniRule"/>
</dbReference>
<dbReference type="CDD" id="cd07090">
    <property type="entry name" value="ALDH_F9_TMBADH"/>
    <property type="match status" value="1"/>
</dbReference>
<dbReference type="FunFam" id="3.40.309.10:FF:000014">
    <property type="entry name" value="NAD/NADP-dependent betaine aldehyde dehydrogenase"/>
    <property type="match status" value="1"/>
</dbReference>
<dbReference type="FunFam" id="3.40.605.10:FF:000007">
    <property type="entry name" value="NAD/NADP-dependent betaine aldehyde dehydrogenase"/>
    <property type="match status" value="1"/>
</dbReference>
<dbReference type="Gene3D" id="3.40.605.10">
    <property type="entry name" value="Aldehyde Dehydrogenase, Chain A, domain 1"/>
    <property type="match status" value="1"/>
</dbReference>
<dbReference type="Gene3D" id="3.40.309.10">
    <property type="entry name" value="Aldehyde Dehydrogenase, Chain A, domain 2"/>
    <property type="match status" value="1"/>
</dbReference>
<dbReference type="HAMAP" id="MF_00804">
    <property type="entry name" value="BADH"/>
    <property type="match status" value="1"/>
</dbReference>
<dbReference type="InterPro" id="IPR016161">
    <property type="entry name" value="Ald_DH/histidinol_DH"/>
</dbReference>
<dbReference type="InterPro" id="IPR016163">
    <property type="entry name" value="Ald_DH_C"/>
</dbReference>
<dbReference type="InterPro" id="IPR016160">
    <property type="entry name" value="Ald_DH_CS_CYS"/>
</dbReference>
<dbReference type="InterPro" id="IPR029510">
    <property type="entry name" value="Ald_DH_CS_GLU"/>
</dbReference>
<dbReference type="InterPro" id="IPR016162">
    <property type="entry name" value="Ald_DH_N"/>
</dbReference>
<dbReference type="InterPro" id="IPR015590">
    <property type="entry name" value="Aldehyde_DH_dom"/>
</dbReference>
<dbReference type="InterPro" id="IPR011264">
    <property type="entry name" value="BADH"/>
</dbReference>
<dbReference type="NCBIfam" id="TIGR01804">
    <property type="entry name" value="BADH"/>
    <property type="match status" value="1"/>
</dbReference>
<dbReference type="NCBIfam" id="NF009725">
    <property type="entry name" value="PRK13252.1"/>
    <property type="match status" value="1"/>
</dbReference>
<dbReference type="PANTHER" id="PTHR11699">
    <property type="entry name" value="ALDEHYDE DEHYDROGENASE-RELATED"/>
    <property type="match status" value="1"/>
</dbReference>
<dbReference type="Pfam" id="PF00171">
    <property type="entry name" value="Aldedh"/>
    <property type="match status" value="1"/>
</dbReference>
<dbReference type="SUPFAM" id="SSF53720">
    <property type="entry name" value="ALDH-like"/>
    <property type="match status" value="1"/>
</dbReference>
<dbReference type="PROSITE" id="PS00070">
    <property type="entry name" value="ALDEHYDE_DEHYDR_CYS"/>
    <property type="match status" value="1"/>
</dbReference>
<dbReference type="PROSITE" id="PS00687">
    <property type="entry name" value="ALDEHYDE_DEHYDR_GLU"/>
    <property type="match status" value="1"/>
</dbReference>
<protein>
    <recommendedName>
        <fullName evidence="1">Betaine aldehyde dehydrogenase</fullName>
        <shortName evidence="1">BADH</shortName>
        <ecNumber evidence="1">1.2.1.8</ecNumber>
    </recommendedName>
</protein>
<accession>B0V944</accession>
<name>BETB_ACIBY</name>
<feature type="chain" id="PRO_1000133938" description="Betaine aldehyde dehydrogenase">
    <location>
        <begin position="1"/>
        <end position="490"/>
    </location>
</feature>
<feature type="active site" description="Charge relay system" evidence="1">
    <location>
        <position position="162"/>
    </location>
</feature>
<feature type="active site" description="Proton acceptor" evidence="1">
    <location>
        <position position="252"/>
    </location>
</feature>
<feature type="active site" description="Nucleophile" evidence="1">
    <location>
        <position position="286"/>
    </location>
</feature>
<feature type="active site" description="Charge relay system" evidence="1">
    <location>
        <position position="464"/>
    </location>
</feature>
<feature type="binding site" evidence="1">
    <location>
        <position position="26"/>
    </location>
    <ligand>
        <name>K(+)</name>
        <dbReference type="ChEBI" id="CHEBI:29103"/>
        <label>1</label>
    </ligand>
</feature>
<feature type="binding site" evidence="1">
    <location>
        <position position="27"/>
    </location>
    <ligand>
        <name>K(+)</name>
        <dbReference type="ChEBI" id="CHEBI:29103"/>
        <label>1</label>
    </ligand>
</feature>
<feature type="binding site" evidence="1">
    <location>
        <position position="93"/>
    </location>
    <ligand>
        <name>K(+)</name>
        <dbReference type="ChEBI" id="CHEBI:29103"/>
        <label>1</label>
    </ligand>
</feature>
<feature type="binding site" evidence="1">
    <location>
        <begin position="150"/>
        <end position="152"/>
    </location>
    <ligand>
        <name>NAD(+)</name>
        <dbReference type="ChEBI" id="CHEBI:57540"/>
    </ligand>
</feature>
<feature type="binding site" evidence="1">
    <location>
        <begin position="176"/>
        <end position="179"/>
    </location>
    <ligand>
        <name>NAD(+)</name>
        <dbReference type="ChEBI" id="CHEBI:57540"/>
    </ligand>
</feature>
<feature type="binding site" evidence="1">
    <location>
        <begin position="230"/>
        <end position="233"/>
    </location>
    <ligand>
        <name>NAD(+)</name>
        <dbReference type="ChEBI" id="CHEBI:57540"/>
    </ligand>
</feature>
<feature type="binding site" evidence="1">
    <location>
        <position position="246"/>
    </location>
    <ligand>
        <name>K(+)</name>
        <dbReference type="ChEBI" id="CHEBI:29103"/>
        <label>2</label>
    </ligand>
</feature>
<feature type="binding site" evidence="1">
    <location>
        <position position="254"/>
    </location>
    <ligand>
        <name>NAD(+)</name>
        <dbReference type="ChEBI" id="CHEBI:57540"/>
    </ligand>
</feature>
<feature type="binding site" description="covalent" evidence="1">
    <location>
        <position position="286"/>
    </location>
    <ligand>
        <name>NAD(+)</name>
        <dbReference type="ChEBI" id="CHEBI:57540"/>
    </ligand>
</feature>
<feature type="binding site" evidence="1">
    <location>
        <position position="387"/>
    </location>
    <ligand>
        <name>NAD(+)</name>
        <dbReference type="ChEBI" id="CHEBI:57540"/>
    </ligand>
</feature>
<feature type="binding site" evidence="1">
    <location>
        <position position="457"/>
    </location>
    <ligand>
        <name>K(+)</name>
        <dbReference type="ChEBI" id="CHEBI:29103"/>
        <label>2</label>
    </ligand>
</feature>
<feature type="binding site" evidence="1">
    <location>
        <position position="460"/>
    </location>
    <ligand>
        <name>K(+)</name>
        <dbReference type="ChEBI" id="CHEBI:29103"/>
        <label>2</label>
    </ligand>
</feature>
<feature type="site" description="Seems to be a necessary countercharge to the potassium cations" evidence="1">
    <location>
        <position position="248"/>
    </location>
</feature>
<feature type="modified residue" description="Cysteine sulfenic acid (-SOH)" evidence="1">
    <location>
        <position position="286"/>
    </location>
</feature>
<keyword id="KW-0479">Metal-binding</keyword>
<keyword id="KW-0520">NAD</keyword>
<keyword id="KW-0521">NADP</keyword>
<keyword id="KW-0558">Oxidation</keyword>
<keyword id="KW-0560">Oxidoreductase</keyword>
<keyword id="KW-0630">Potassium</keyword>